<accession>A0T2N3</accession>
<accession>Q4V905</accession>
<evidence type="ECO:0000250" key="1">
    <source>
        <dbReference type="UniProtKB" id="P35414"/>
    </source>
</evidence>
<evidence type="ECO:0000250" key="2">
    <source>
        <dbReference type="UniProtKB" id="P79960"/>
    </source>
</evidence>
<evidence type="ECO:0000250" key="3">
    <source>
        <dbReference type="UniProtKB" id="Q4VA82"/>
    </source>
</evidence>
<evidence type="ECO:0000250" key="4">
    <source>
        <dbReference type="UniProtKB" id="Q7SZP9"/>
    </source>
</evidence>
<evidence type="ECO:0000250" key="5">
    <source>
        <dbReference type="UniProtKB" id="Q9WV08"/>
    </source>
</evidence>
<evidence type="ECO:0000255" key="6"/>
<evidence type="ECO:0000255" key="7">
    <source>
        <dbReference type="PROSITE-ProRule" id="PRU00521"/>
    </source>
</evidence>
<evidence type="ECO:0000269" key="8">
    <source>
    </source>
</evidence>
<evidence type="ECO:0000269" key="9">
    <source>
    </source>
</evidence>
<evidence type="ECO:0000269" key="10">
    <source>
    </source>
</evidence>
<evidence type="ECO:0000269" key="11">
    <source>
    </source>
</evidence>
<evidence type="ECO:0000269" key="12">
    <source>
    </source>
</evidence>
<evidence type="ECO:0000303" key="13">
    <source>
    </source>
</evidence>
<evidence type="ECO:0000305" key="14"/>
<evidence type="ECO:0000312" key="15">
    <source>
        <dbReference type="EMBL" id="AAH97125.1"/>
    </source>
</evidence>
<evidence type="ECO:0000312" key="16">
    <source>
        <dbReference type="EMBL" id="ABK63803.1"/>
    </source>
</evidence>
<feature type="chain" id="PRO_0000312594" description="Apelin receptor B">
    <location>
        <begin position="1"/>
        <end position="359"/>
    </location>
</feature>
<feature type="topological domain" description="Extracellular" evidence="6">
    <location>
        <begin position="1"/>
        <end position="36"/>
    </location>
</feature>
<feature type="transmembrane region" description="Helical; Name=1" evidence="6">
    <location>
        <begin position="37"/>
        <end position="57"/>
    </location>
</feature>
<feature type="topological domain" description="Cytoplasmic" evidence="6">
    <location>
        <begin position="58"/>
        <end position="75"/>
    </location>
</feature>
<feature type="transmembrane region" description="Helical; Name=2" evidence="6">
    <location>
        <begin position="76"/>
        <end position="96"/>
    </location>
</feature>
<feature type="topological domain" description="Extracellular" evidence="6">
    <location>
        <begin position="97"/>
        <end position="108"/>
    </location>
</feature>
<feature type="transmembrane region" description="Helical; Name=3" evidence="6">
    <location>
        <begin position="109"/>
        <end position="129"/>
    </location>
</feature>
<feature type="topological domain" description="Cytoplasmic" evidence="6">
    <location>
        <begin position="130"/>
        <end position="151"/>
    </location>
</feature>
<feature type="transmembrane region" description="Helical; Name=4" evidence="6">
    <location>
        <begin position="152"/>
        <end position="172"/>
    </location>
</feature>
<feature type="topological domain" description="Extracellular" evidence="6">
    <location>
        <begin position="173"/>
        <end position="213"/>
    </location>
</feature>
<feature type="transmembrane region" description="Helical; Name=5" evidence="6">
    <location>
        <begin position="214"/>
        <end position="234"/>
    </location>
</feature>
<feature type="topological domain" description="Cytoplasmic" evidence="6">
    <location>
        <begin position="235"/>
        <end position="251"/>
    </location>
</feature>
<feature type="transmembrane region" description="Helical; Name=6" evidence="6">
    <location>
        <begin position="252"/>
        <end position="272"/>
    </location>
</feature>
<feature type="topological domain" description="Extracellular" evidence="6">
    <location>
        <begin position="273"/>
        <end position="286"/>
    </location>
</feature>
<feature type="transmembrane region" description="Helical; Name=7" evidence="6">
    <location>
        <begin position="287"/>
        <end position="307"/>
    </location>
</feature>
<feature type="topological domain" description="Cytoplasmic" evidence="6">
    <location>
        <begin position="308"/>
        <end position="359"/>
    </location>
</feature>
<feature type="glycosylation site" description="N-linked (GlcNAc...) asparagine" evidence="6">
    <location>
        <position position="6"/>
    </location>
</feature>
<feature type="glycosylation site" description="N-linked (GlcNAc...) asparagine" evidence="6">
    <location>
        <position position="21"/>
    </location>
</feature>
<feature type="glycosylation site" description="N-linked (GlcNAc...) asparagine" evidence="6">
    <location>
        <position position="182"/>
    </location>
</feature>
<feature type="disulfide bond" evidence="1">
    <location>
        <begin position="25"/>
        <end position="288"/>
    </location>
</feature>
<feature type="disulfide bond" evidence="1">
    <location>
        <begin position="107"/>
        <end position="186"/>
    </location>
</feature>
<feature type="mutagenesis site" description="In grns608; defective in early myocardial specification." evidence="9 10">
    <original>W</original>
    <variation>L</variation>
    <location>
        <position position="90"/>
    </location>
</feature>
<keyword id="KW-0037">Angiogenesis</keyword>
<keyword id="KW-1003">Cell membrane</keyword>
<keyword id="KW-0217">Developmental protein</keyword>
<keyword id="KW-1015">Disulfide bond</keyword>
<keyword id="KW-0297">G-protein coupled receptor</keyword>
<keyword id="KW-0306">Gastrulation</keyword>
<keyword id="KW-0325">Glycoprotein</keyword>
<keyword id="KW-0472">Membrane</keyword>
<keyword id="KW-0675">Receptor</keyword>
<keyword id="KW-1185">Reference proteome</keyword>
<keyword id="KW-0807">Transducer</keyword>
<keyword id="KW-0812">Transmembrane</keyword>
<keyword id="KW-1133">Transmembrane helix</keyword>
<name>APJB_DANRE</name>
<comment type="function">
    <text evidence="1 2 3 5 8 9 10 11 12">G protein-coupled receptor for peptide hormones apelin (apln) and apelin receptor early endogenous ligand (apela), that plays a role in the regulation of normal cardiovascular function and fluid homeostasis. When acting as apelin receptor, activates both G(i) protein pathway that inhibits adenylate cyclase activity, and the beta-arrestin pathway that promotes internalization of the receptor (PubMed:17336905, PubMed:17336906, PubMed:24316148, PubMed:24407481). Also functions as mechanoreceptor that is activated by pathological stimuli in a G-protein-independent fashion to induce beta-arrestin signaling, hence eliciting cardiac hypertrophy. However, the presence of apelin ligand blunts cardiac hypertrophic induction from APLNR/APJ on response to pathological stimuli (By similarity). Plays a key role in early development such as gastrulation, blood vessels formation and heart morphogenesis by acting as a receptor for apela hormone, promoting endoderm and mesendoderm cell migration and regulating the migration of cells fated to become myocardial progenitors, respectively (PubMed:17336905, PubMed:17336906, PubMed:24316148, PubMed:24407481, PubMed:26017639). Positively regulates angioblast migration toward the embryonic midline, i.e. the position of the future vessel formation, during vasculogenesis (PubMed:26017639). May promote sinus venosus (SV)-derived endothelial cells migration into the developing heart to promote coronary blood vessel development (By similarity). Required for cardiovascular development, particularly for intersomitic vein angiogenesis by acting as a receptor for apln hormone (By similarity). Plays a role in various processes in adults such as regulation of blood vessel formation, blood pressure, heart contractility and heart failure (By similarity). Acts redundantly with agtrl1a in heart development (PubMed:17336906).</text>
</comment>
<comment type="function">
    <text evidence="1 4 5">G protein-coupled receptor for peptide hormones apelin (APLN) and apelin receptor early endogenous ligand (APELA/ELA), that plays a role in the regulation of normal cardiovascular function and fluid homeostasis. When acting as apelin receptor, activates both G(i) protein pathway that inhibits adenylate cyclase activity, and the beta-arrestin pathway that promotes internalization of the receptor. APLNR/APJ also functions as mechanoreceptor that is activated by pathological stimuli in a G-protein-independent fashion to induce beta-arrestin signaling, hence eliciting cardiac hypertrophy (By similarity). Plays a key role in early development such as gastrulation, blood vessels formation and heart morphogenesis by acting as a APELA receptor (By similarity). May promote angioblast migration toward the embryonic midline, i.e. the position of the future vessel formation, during vasculogenesis (By similarity). Promotes sinus venosus (SV)-derived endothelial cells migration into the developing heart to promote coronary blood vessel development (By similarity). Also plays a role in various processes in adults such as regulation of blood vessel formation, blood pressure, heart contractility and heart failure (By similarity).</text>
</comment>
<comment type="subcellular location">
    <subcellularLocation>
        <location evidence="2">Cell membrane</location>
        <topology evidence="2">Multi-pass membrane protein</topology>
    </subcellularLocation>
    <text evidence="1 2">Internalized to the cytoplasm after exposure to apelin (apln). After exposure to apelin receptor early endogenous ligand (apela), internalized from the cell surface into an endosomal recycling compartment, from where it is recycled to the cell membrane.</text>
</comment>
<comment type="tissue specificity">
    <text evidence="8">Mesendodermal expression at the blastoderm margin appears by 4.5 hpf. At early gastrulation, expression is maintained ventrolaterally while expression in dorsal cells and random deep cells declines. During gastrulation and segmentation, expression is maintained in adaxial, intermediate, and lateral plate mesoderm. During late segmentation, expressed in several regions including the forming heart. By 24 hpf, expressed in the dorsal aorta, caudal vein, and intersomitic blood vessels.</text>
</comment>
<comment type="disruption phenotype">
    <text evidence="10 11 12">Morpholino knockdown of the protein induces embryonic lethality due to cardiac dysplasia with little to no blood circulation around 6 days post-fertilization (dpf) (PubMed:24316148). Mutant embryos show pericardial edema and accumulation of erythrocytes in the intermediate cell mass (ICM) at 30 hours post-fertilization (hpf) (PubMed:24316148). Display decreased angioblast migration to the embryonic midline during late gastrulation (PubMed:24316148, PubMed:24407481, PubMed:26017639).</text>
</comment>
<comment type="similarity">
    <text evidence="7">Belongs to the G-protein coupled receptor 1 family.</text>
</comment>
<comment type="sequence caution" evidence="14">
    <conflict type="erroneous initiation">
        <sequence resource="EMBL-CDS" id="AAH97125"/>
    </conflict>
</comment>
<organism>
    <name type="scientific">Danio rerio</name>
    <name type="common">Zebrafish</name>
    <name type="synonym">Brachydanio rerio</name>
    <dbReference type="NCBI Taxonomy" id="7955"/>
    <lineage>
        <taxon>Eukaryota</taxon>
        <taxon>Metazoa</taxon>
        <taxon>Chordata</taxon>
        <taxon>Craniata</taxon>
        <taxon>Vertebrata</taxon>
        <taxon>Euteleostomi</taxon>
        <taxon>Actinopterygii</taxon>
        <taxon>Neopterygii</taxon>
        <taxon>Teleostei</taxon>
        <taxon>Ostariophysi</taxon>
        <taxon>Cypriniformes</taxon>
        <taxon>Danionidae</taxon>
        <taxon>Danioninae</taxon>
        <taxon>Danio</taxon>
    </lineage>
</organism>
<proteinExistence type="evidence at protein level"/>
<dbReference type="EMBL" id="EF079888">
    <property type="protein sequence ID" value="ABK63803.1"/>
    <property type="molecule type" value="mRNA"/>
</dbReference>
<dbReference type="EMBL" id="BC097125">
    <property type="protein sequence ID" value="AAH97125.1"/>
    <property type="status" value="ALT_INIT"/>
    <property type="molecule type" value="mRNA"/>
</dbReference>
<dbReference type="RefSeq" id="NP_001025368.2">
    <property type="nucleotide sequence ID" value="NM_001030197.2"/>
</dbReference>
<dbReference type="SMR" id="A0T2N3"/>
<dbReference type="FunCoup" id="A0T2N3">
    <property type="interactions" value="234"/>
</dbReference>
<dbReference type="STRING" id="7955.ENSDARP00000108783"/>
<dbReference type="GlyCosmos" id="A0T2N3">
    <property type="glycosylation" value="3 sites, No reported glycans"/>
</dbReference>
<dbReference type="PaxDb" id="7955-ENSDARP00000108783"/>
<dbReference type="Ensembl" id="ENSDART00000129643">
    <property type="protein sequence ID" value="ENSDARP00000108783"/>
    <property type="gene ID" value="ENSDARG00000036670"/>
</dbReference>
<dbReference type="GeneID" id="565492"/>
<dbReference type="KEGG" id="dre:565492"/>
<dbReference type="AGR" id="ZFIN:ZDB-GENE-050913-90"/>
<dbReference type="CTD" id="565492"/>
<dbReference type="ZFIN" id="ZDB-GENE-050913-90">
    <property type="gene designation" value="aplnrb"/>
</dbReference>
<dbReference type="eggNOG" id="KOG3656">
    <property type="taxonomic scope" value="Eukaryota"/>
</dbReference>
<dbReference type="HOGENOM" id="CLU_009579_8_1_1"/>
<dbReference type="InParanoid" id="A0T2N3"/>
<dbReference type="OMA" id="LCYCCIG"/>
<dbReference type="OrthoDB" id="5974286at2759"/>
<dbReference type="PhylomeDB" id="A0T2N3"/>
<dbReference type="TreeFam" id="TF330024"/>
<dbReference type="Reactome" id="R-DRE-375276">
    <property type="pathway name" value="Peptide ligand-binding receptors"/>
</dbReference>
<dbReference type="Reactome" id="R-DRE-418594">
    <property type="pathway name" value="G alpha (i) signalling events"/>
</dbReference>
<dbReference type="PRO" id="PR:A0T2N3"/>
<dbReference type="Proteomes" id="UP000000437">
    <property type="component" value="Chromosome 10"/>
</dbReference>
<dbReference type="Bgee" id="ENSDARG00000036670">
    <property type="expression patterns" value="Expressed in spleen and 38 other cell types or tissues"/>
</dbReference>
<dbReference type="GO" id="GO:0005886">
    <property type="term" value="C:plasma membrane"/>
    <property type="evidence" value="ECO:0000250"/>
    <property type="project" value="UniProtKB"/>
</dbReference>
<dbReference type="GO" id="GO:0060182">
    <property type="term" value="F:apelin receptor activity"/>
    <property type="evidence" value="ECO:0000314"/>
    <property type="project" value="ZFIN"/>
</dbReference>
<dbReference type="GO" id="GO:0140897">
    <property type="term" value="F:mechanoreceptor activity"/>
    <property type="evidence" value="ECO:0000250"/>
    <property type="project" value="UniProtKB"/>
</dbReference>
<dbReference type="GO" id="GO:0035479">
    <property type="term" value="P:angioblast cell migration from lateral mesoderm to midline"/>
    <property type="evidence" value="ECO:0000315"/>
    <property type="project" value="ZFIN"/>
</dbReference>
<dbReference type="GO" id="GO:0001568">
    <property type="term" value="P:blood vessel development"/>
    <property type="evidence" value="ECO:0000318"/>
    <property type="project" value="GO_Central"/>
</dbReference>
<dbReference type="GO" id="GO:0048738">
    <property type="term" value="P:cardiac muscle tissue development"/>
    <property type="evidence" value="ECO:0000315"/>
    <property type="project" value="UniProtKB"/>
</dbReference>
<dbReference type="GO" id="GO:0016477">
    <property type="term" value="P:cell migration"/>
    <property type="evidence" value="ECO:0000315"/>
    <property type="project" value="UniProtKB"/>
</dbReference>
<dbReference type="GO" id="GO:0060976">
    <property type="term" value="P:coronary vasculature development"/>
    <property type="evidence" value="ECO:0000250"/>
    <property type="project" value="UniProtKB"/>
</dbReference>
<dbReference type="GO" id="GO:0061371">
    <property type="term" value="P:determination of heart left/right asymmetry"/>
    <property type="evidence" value="ECO:0000315"/>
    <property type="project" value="ZFIN"/>
</dbReference>
<dbReference type="GO" id="GO:0071910">
    <property type="term" value="P:determination of liver left/right asymmetry"/>
    <property type="evidence" value="ECO:0000315"/>
    <property type="project" value="ZFIN"/>
</dbReference>
<dbReference type="GO" id="GO:0035987">
    <property type="term" value="P:endodermal cell differentiation"/>
    <property type="evidence" value="ECO:0000316"/>
    <property type="project" value="ZFIN"/>
</dbReference>
<dbReference type="GO" id="GO:0090162">
    <property type="term" value="P:establishment of epithelial cell polarity"/>
    <property type="evidence" value="ECO:0000315"/>
    <property type="project" value="ZFIN"/>
</dbReference>
<dbReference type="GO" id="GO:0007186">
    <property type="term" value="P:G protein-coupled receptor signaling pathway"/>
    <property type="evidence" value="ECO:0000318"/>
    <property type="project" value="GO_Central"/>
</dbReference>
<dbReference type="GO" id="GO:0007369">
    <property type="term" value="P:gastrulation"/>
    <property type="evidence" value="ECO:0000315"/>
    <property type="project" value="ZFIN"/>
</dbReference>
<dbReference type="GO" id="GO:0001702">
    <property type="term" value="P:gastrulation with mouth forming second"/>
    <property type="evidence" value="ECO:0000315"/>
    <property type="project" value="UniProtKB"/>
</dbReference>
<dbReference type="GO" id="GO:0007507">
    <property type="term" value="P:heart development"/>
    <property type="evidence" value="ECO:0000315"/>
    <property type="project" value="UniProtKB"/>
</dbReference>
<dbReference type="GO" id="GO:0008078">
    <property type="term" value="P:mesodermal cell migration"/>
    <property type="evidence" value="ECO:0000315"/>
    <property type="project" value="ZFIN"/>
</dbReference>
<dbReference type="GO" id="GO:0043951">
    <property type="term" value="P:negative regulation of cAMP-mediated signaling"/>
    <property type="evidence" value="ECO:0000250"/>
    <property type="project" value="UniProtKB"/>
</dbReference>
<dbReference type="GO" id="GO:0045766">
    <property type="term" value="P:positive regulation of angiogenesis"/>
    <property type="evidence" value="ECO:0000250"/>
    <property type="project" value="UniProtKB"/>
</dbReference>
<dbReference type="GO" id="GO:1903589">
    <property type="term" value="P:positive regulation of blood vessel endothelial cell proliferation involved in sprouting angiogenesis"/>
    <property type="evidence" value="ECO:0000250"/>
    <property type="project" value="UniProtKB"/>
</dbReference>
<dbReference type="GO" id="GO:0051281">
    <property type="term" value="P:positive regulation of release of sequestered calcium ion into cytosol"/>
    <property type="evidence" value="ECO:0000250"/>
    <property type="project" value="UniProtKB"/>
</dbReference>
<dbReference type="GO" id="GO:1900107">
    <property type="term" value="P:regulation of nodal signaling pathway"/>
    <property type="evidence" value="ECO:0000316"/>
    <property type="project" value="ZFIN"/>
</dbReference>
<dbReference type="GO" id="GO:0002040">
    <property type="term" value="P:sprouting angiogenesis"/>
    <property type="evidence" value="ECO:0000316"/>
    <property type="project" value="ZFIN"/>
</dbReference>
<dbReference type="GO" id="GO:0001570">
    <property type="term" value="P:vasculogenesis"/>
    <property type="evidence" value="ECO:0000250"/>
    <property type="project" value="UniProtKB"/>
</dbReference>
<dbReference type="CDD" id="cd15190">
    <property type="entry name" value="7tmA_Apelin_R"/>
    <property type="match status" value="1"/>
</dbReference>
<dbReference type="FunFam" id="1.20.1070.10:FF:000106">
    <property type="entry name" value="Apelin receptor a"/>
    <property type="match status" value="1"/>
</dbReference>
<dbReference type="Gene3D" id="1.20.1070.10">
    <property type="entry name" value="Rhodopsin 7-helix transmembrane proteins"/>
    <property type="match status" value="1"/>
</dbReference>
<dbReference type="InterPro" id="IPR000248">
    <property type="entry name" value="ATII_rcpt"/>
</dbReference>
<dbReference type="InterPro" id="IPR050119">
    <property type="entry name" value="CCR1-9-like"/>
</dbReference>
<dbReference type="InterPro" id="IPR000276">
    <property type="entry name" value="GPCR_Rhodpsn"/>
</dbReference>
<dbReference type="InterPro" id="IPR017452">
    <property type="entry name" value="GPCR_Rhodpsn_7TM"/>
</dbReference>
<dbReference type="PANTHER" id="PTHR10489:SF953">
    <property type="entry name" value="APELIN RECEPTOR"/>
    <property type="match status" value="1"/>
</dbReference>
<dbReference type="PANTHER" id="PTHR10489">
    <property type="entry name" value="CELL ADHESION MOLECULE"/>
    <property type="match status" value="1"/>
</dbReference>
<dbReference type="Pfam" id="PF00001">
    <property type="entry name" value="7tm_1"/>
    <property type="match status" value="1"/>
</dbReference>
<dbReference type="PRINTS" id="PR00241">
    <property type="entry name" value="ANGIOTENSINR"/>
</dbReference>
<dbReference type="PRINTS" id="PR00237">
    <property type="entry name" value="GPCRRHODOPSN"/>
</dbReference>
<dbReference type="SUPFAM" id="SSF81321">
    <property type="entry name" value="Family A G protein-coupled receptor-like"/>
    <property type="match status" value="1"/>
</dbReference>
<dbReference type="PROSITE" id="PS00237">
    <property type="entry name" value="G_PROTEIN_RECEP_F1_1"/>
    <property type="match status" value="1"/>
</dbReference>
<dbReference type="PROSITE" id="PS50262">
    <property type="entry name" value="G_PROTEIN_RECEP_F1_2"/>
    <property type="match status" value="1"/>
</dbReference>
<protein>
    <recommendedName>
        <fullName>Apelin receptor B</fullName>
    </recommendedName>
    <alternativeName>
        <fullName>Angiotensin II receptor-like 1b</fullName>
    </alternativeName>
    <alternativeName>
        <fullName>Angiotensin receptor-like 1b</fullName>
    </alternativeName>
    <alternativeName>
        <fullName>G-protein coupled receptor APJ B</fullName>
    </alternativeName>
    <alternativeName>
        <fullName>Protein grinch</fullName>
    </alternativeName>
</protein>
<gene>
    <name type="primary">aplnrb</name>
    <name type="synonym">agtrl1b</name>
    <name evidence="13" type="synonym">grn</name>
    <name type="ORF">zgc:114063</name>
</gene>
<sequence>MNAMDNMTADYSPDYFDDAVNSSMCEYDEWEPSYSLIPVLYMLIFILGLTGNGVVIFTVWRAQSKRRAADVYIGNLALADLTFVVTLPLWAVYTALGYHWPFGVALCKISSYVVLLNMYASVFCLTCLSLDRYMAIVHSLTSTQLRTRGHMRASLTAIWLLSGVLAAPTLLFRTTVYDVETNRTSCAMDFNLVVSQPGQETYWIAGLSISSTALGFLIPLLAMMVCYGFIGCTVTRHFNSLRKEDQRKRRLLKIITTLVVVFAACWMPFHVVKTMDALSYLNLAPDSCTFLNLLLLAHPYATCLAYVNSCLNPLLYAFFDLRFRSQCLCLLNLKKALHASPASSLSSQKTEAQSLATKV</sequence>
<reference evidence="14 16" key="1">
    <citation type="journal article" date="2007" name="Dev. Cell">
        <title>Apelin and its receptor control heart field formation during zebrafish gastrulation.</title>
        <authorList>
            <person name="Zeng X.-X.I."/>
            <person name="Wilm T.P."/>
            <person name="Sepich D.S."/>
            <person name="Solnica-Krezel L."/>
        </authorList>
    </citation>
    <scope>NUCLEOTIDE SEQUENCE [MRNA]</scope>
    <scope>FUNCTION</scope>
    <scope>TISSUE SPECIFICITY</scope>
</reference>
<reference evidence="15" key="2">
    <citation type="submission" date="2005-06" db="EMBL/GenBank/DDBJ databases">
        <authorList>
            <consortium name="NIH - Zebrafish Gene Collection (ZGC) project"/>
        </authorList>
    </citation>
    <scope>NUCLEOTIDE SEQUENCE [LARGE SCALE MRNA]</scope>
    <source>
        <tissue evidence="15">Embryo</tissue>
    </source>
</reference>
<reference evidence="14" key="3">
    <citation type="journal article" date="2007" name="Dev. Cell">
        <title>The G protein-coupled receptor Agtrl1b regulates early development of myocardial progenitors.</title>
        <authorList>
            <person name="Scott I.C."/>
            <person name="Masri B."/>
            <person name="D'Amico L.A."/>
            <person name="Jin S.-W."/>
            <person name="Jungblut B."/>
            <person name="Wehman A.M."/>
            <person name="Baier H."/>
            <person name="Audigier Y."/>
            <person name="Stainier D.Y.R."/>
        </authorList>
    </citation>
    <scope>FUNCTION</scope>
    <scope>MUTAGENESIS OF TRP-90</scope>
</reference>
<reference evidence="14" key="4">
    <citation type="journal article" date="2007" name="Dev. Cell">
        <title>Apelin and its G protein-coupled receptor regulate cardiac development as well as cardiac function.</title>
        <authorList>
            <person name="Quertermous T."/>
        </authorList>
    </citation>
    <scope>REVIEW</scope>
</reference>
<reference key="5">
    <citation type="journal article" date="2013" name="Dev. Cell">
        <title>ELABELA: a hormone essential for heart development signals via the apelin receptor.</title>
        <authorList>
            <person name="Chng S.C."/>
            <person name="Ho L."/>
            <person name="Tian J."/>
            <person name="Reversade B."/>
        </authorList>
    </citation>
    <scope>FUNCTION</scope>
    <scope>INTERACTION WITH APELA</scope>
    <scope>MUTAGENESIS OF TRP-90</scope>
    <scope>DISRUPTION PHENOTYPE</scope>
</reference>
<reference key="6">
    <citation type="journal article" date="2014" name="Science">
        <title>Toddler: an embryonic signal that promotes cell movement via apelin receptors.</title>
        <authorList>
            <person name="Pauli A."/>
            <person name="Norris M.L."/>
            <person name="Valen E."/>
            <person name="Chew G.L."/>
            <person name="Gagnon J.A."/>
            <person name="Zimmerman S."/>
            <person name="Mitchell A."/>
            <person name="Ma J."/>
            <person name="Dubrulle J."/>
            <person name="Reyon D."/>
            <person name="Tsai S.Q."/>
            <person name="Joung J.K."/>
            <person name="Saghatelian A."/>
            <person name="Schier A.F."/>
        </authorList>
    </citation>
    <scope>FUNCTION</scope>
    <scope>INTERACTION WITH APELA</scope>
    <scope>DISRUPTION PHENOTYPE</scope>
</reference>
<reference key="7">
    <citation type="journal article" date="2015" name="Elife">
        <title>The hormonal peptide Elabela guides angioblasts to the midline during vasculogenesis.</title>
        <authorList>
            <person name="Helker C.S."/>
            <person name="Schuermann A."/>
            <person name="Pollmann C."/>
            <person name="Chng S.C."/>
            <person name="Kiefer F."/>
            <person name="Reversade B."/>
            <person name="Herzog W."/>
        </authorList>
    </citation>
    <scope>FUNCTION</scope>
    <scope>DISRUPTION PHENOTYPE</scope>
</reference>